<proteinExistence type="inferred from homology"/>
<feature type="chain" id="PRO_0000352635" description="D-galactonate dehydratase">
    <location>
        <begin position="1"/>
        <end position="382"/>
    </location>
</feature>
<feature type="active site" description="Proton donor" evidence="1">
    <location>
        <position position="185"/>
    </location>
</feature>
<feature type="active site" description="Proton acceptor" evidence="1">
    <location>
        <position position="285"/>
    </location>
</feature>
<feature type="binding site" evidence="2">
    <location>
        <position position="183"/>
    </location>
    <ligand>
        <name>Mg(2+)</name>
        <dbReference type="ChEBI" id="CHEBI:18420"/>
    </ligand>
</feature>
<feature type="binding site" evidence="2">
    <location>
        <position position="209"/>
    </location>
    <ligand>
        <name>Mg(2+)</name>
        <dbReference type="ChEBI" id="CHEBI:18420"/>
    </ligand>
</feature>
<feature type="binding site" evidence="2">
    <location>
        <position position="235"/>
    </location>
    <ligand>
        <name>Mg(2+)</name>
        <dbReference type="ChEBI" id="CHEBI:18420"/>
    </ligand>
</feature>
<feature type="site" description="Increases basicity of active site His" evidence="2">
    <location>
        <position position="258"/>
    </location>
</feature>
<feature type="site" description="Transition state stabilizer" evidence="2">
    <location>
        <position position="310"/>
    </location>
</feature>
<dbReference type="EC" id="4.2.1.6" evidence="2"/>
<dbReference type="EMBL" id="AE006468">
    <property type="protein sequence ID" value="AAL22687.1"/>
    <property type="molecule type" value="Genomic_DNA"/>
</dbReference>
<dbReference type="RefSeq" id="WP_000704735.1">
    <property type="nucleotide sequence ID" value="NC_003197.2"/>
</dbReference>
<dbReference type="SMR" id="Q8ZKZ1"/>
<dbReference type="STRING" id="99287.STM3828"/>
<dbReference type="PaxDb" id="99287-STM3828"/>
<dbReference type="KEGG" id="stm:STM3828"/>
<dbReference type="PATRIC" id="fig|99287.12.peg.4053"/>
<dbReference type="HOGENOM" id="CLU_030273_3_2_6"/>
<dbReference type="OMA" id="PRWCFLK"/>
<dbReference type="PhylomeDB" id="Q8ZKZ1"/>
<dbReference type="BioCyc" id="SENT99287:STM3828-MONOMER"/>
<dbReference type="UniPathway" id="UPA00081">
    <property type="reaction ID" value="UER00518"/>
</dbReference>
<dbReference type="Proteomes" id="UP000001014">
    <property type="component" value="Chromosome"/>
</dbReference>
<dbReference type="GO" id="GO:0008869">
    <property type="term" value="F:galactonate dehydratase activity"/>
    <property type="evidence" value="ECO:0007669"/>
    <property type="project" value="UniProtKB-UniRule"/>
</dbReference>
<dbReference type="GO" id="GO:0016836">
    <property type="term" value="F:hydro-lyase activity"/>
    <property type="evidence" value="ECO:0000318"/>
    <property type="project" value="GO_Central"/>
</dbReference>
<dbReference type="GO" id="GO:0000287">
    <property type="term" value="F:magnesium ion binding"/>
    <property type="evidence" value="ECO:0007669"/>
    <property type="project" value="UniProtKB-UniRule"/>
</dbReference>
<dbReference type="GO" id="GO:0009063">
    <property type="term" value="P:amino acid catabolic process"/>
    <property type="evidence" value="ECO:0007669"/>
    <property type="project" value="InterPro"/>
</dbReference>
<dbReference type="GO" id="GO:0034194">
    <property type="term" value="P:D-galactonate catabolic process"/>
    <property type="evidence" value="ECO:0000318"/>
    <property type="project" value="GO_Central"/>
</dbReference>
<dbReference type="CDD" id="cd03325">
    <property type="entry name" value="D-galactonate_dehydratase"/>
    <property type="match status" value="1"/>
</dbReference>
<dbReference type="FunFam" id="3.20.20.120:FF:000008">
    <property type="entry name" value="D-galactonate dehydratase"/>
    <property type="match status" value="1"/>
</dbReference>
<dbReference type="FunFam" id="3.30.390.10:FF:000003">
    <property type="entry name" value="D-galactonate dehydratase"/>
    <property type="match status" value="1"/>
</dbReference>
<dbReference type="Gene3D" id="3.20.20.120">
    <property type="entry name" value="Enolase-like C-terminal domain"/>
    <property type="match status" value="1"/>
</dbReference>
<dbReference type="Gene3D" id="3.30.390.10">
    <property type="entry name" value="Enolase-like, N-terminal domain"/>
    <property type="match status" value="1"/>
</dbReference>
<dbReference type="HAMAP" id="MF_01289">
    <property type="entry name" value="Galacton_dehydrat"/>
    <property type="match status" value="1"/>
</dbReference>
<dbReference type="InterPro" id="IPR034593">
    <property type="entry name" value="DgoD-like"/>
</dbReference>
<dbReference type="InterPro" id="IPR036849">
    <property type="entry name" value="Enolase-like_C_sf"/>
</dbReference>
<dbReference type="InterPro" id="IPR029017">
    <property type="entry name" value="Enolase-like_N"/>
</dbReference>
<dbReference type="InterPro" id="IPR029065">
    <property type="entry name" value="Enolase_C-like"/>
</dbReference>
<dbReference type="InterPro" id="IPR023592">
    <property type="entry name" value="Galactonate_deHydtase"/>
</dbReference>
<dbReference type="InterPro" id="IPR018110">
    <property type="entry name" value="Mandel_Rmase/mucon_lact_enz_CS"/>
</dbReference>
<dbReference type="InterPro" id="IPR013342">
    <property type="entry name" value="Mandelate_racemase_C"/>
</dbReference>
<dbReference type="InterPro" id="IPR013341">
    <property type="entry name" value="Mandelate_racemase_N_dom"/>
</dbReference>
<dbReference type="NCBIfam" id="NF010624">
    <property type="entry name" value="PRK14017.1"/>
    <property type="match status" value="1"/>
</dbReference>
<dbReference type="PANTHER" id="PTHR48080:SF2">
    <property type="entry name" value="D-GALACTONATE DEHYDRATASE"/>
    <property type="match status" value="1"/>
</dbReference>
<dbReference type="PANTHER" id="PTHR48080">
    <property type="entry name" value="D-GALACTONATE DEHYDRATASE-RELATED"/>
    <property type="match status" value="1"/>
</dbReference>
<dbReference type="Pfam" id="PF13378">
    <property type="entry name" value="MR_MLE_C"/>
    <property type="match status" value="1"/>
</dbReference>
<dbReference type="Pfam" id="PF02746">
    <property type="entry name" value="MR_MLE_N"/>
    <property type="match status" value="1"/>
</dbReference>
<dbReference type="SFLD" id="SFLDF00003">
    <property type="entry name" value="D-galactonate_dehydratase"/>
    <property type="match status" value="1"/>
</dbReference>
<dbReference type="SFLD" id="SFLDS00001">
    <property type="entry name" value="Enolase"/>
    <property type="match status" value="1"/>
</dbReference>
<dbReference type="SMART" id="SM00922">
    <property type="entry name" value="MR_MLE"/>
    <property type="match status" value="1"/>
</dbReference>
<dbReference type="SUPFAM" id="SSF51604">
    <property type="entry name" value="Enolase C-terminal domain-like"/>
    <property type="match status" value="1"/>
</dbReference>
<dbReference type="SUPFAM" id="SSF54826">
    <property type="entry name" value="Enolase N-terminal domain-like"/>
    <property type="match status" value="1"/>
</dbReference>
<dbReference type="PROSITE" id="PS00908">
    <property type="entry name" value="MR_MLE_1"/>
    <property type="match status" value="1"/>
</dbReference>
<dbReference type="PROSITE" id="PS00909">
    <property type="entry name" value="MR_MLE_2"/>
    <property type="match status" value="1"/>
</dbReference>
<reference key="1">
    <citation type="journal article" date="2001" name="Nature">
        <title>Complete genome sequence of Salmonella enterica serovar Typhimurium LT2.</title>
        <authorList>
            <person name="McClelland M."/>
            <person name="Sanderson K.E."/>
            <person name="Spieth J."/>
            <person name="Clifton S.W."/>
            <person name="Latreille P."/>
            <person name="Courtney L."/>
            <person name="Porwollik S."/>
            <person name="Ali J."/>
            <person name="Dante M."/>
            <person name="Du F."/>
            <person name="Hou S."/>
            <person name="Layman D."/>
            <person name="Leonard S."/>
            <person name="Nguyen C."/>
            <person name="Scott K."/>
            <person name="Holmes A."/>
            <person name="Grewal N."/>
            <person name="Mulvaney E."/>
            <person name="Ryan E."/>
            <person name="Sun H."/>
            <person name="Florea L."/>
            <person name="Miller W."/>
            <person name="Stoneking T."/>
            <person name="Nhan M."/>
            <person name="Waterston R."/>
            <person name="Wilson R.K."/>
        </authorList>
    </citation>
    <scope>NUCLEOTIDE SEQUENCE [LARGE SCALE GENOMIC DNA]</scope>
    <source>
        <strain>LT2 / SGSC1412 / ATCC 700720</strain>
    </source>
</reference>
<evidence type="ECO:0000250" key="1"/>
<evidence type="ECO:0000255" key="2">
    <source>
        <dbReference type="HAMAP-Rule" id="MF_01289"/>
    </source>
</evidence>
<keyword id="KW-0456">Lyase</keyword>
<keyword id="KW-0460">Magnesium</keyword>
<keyword id="KW-0479">Metal-binding</keyword>
<keyword id="KW-1185">Reference proteome</keyword>
<gene>
    <name evidence="2" type="primary">dgoD</name>
    <name type="ordered locus">STM3828</name>
</gene>
<sequence length="382" mass="42379">MKITHITTYRLPPRWMFLKIETDEGVVGWGEPVIEGRARTVEAAVHEFADYLIGKDPARINDLWQVMYRAGFYRGGPIMMSAIAGIDQALWDIKGKVLNAPVWQLMGGLVRDKIKAYSWVGGDRPADVIDGIEKLRGIGFDTFKLNGCEEMGVIDNSRAVDAAVNTVAQIREAFGSEIEFGLDFHGRVSAPMAKVLIKELEPYRPLFIEEPVLAEQAEYYPRLAAQTHIPIAAGERMFSRFEFKRVLDAGGLAILQPDLSHAGGITECYKIAGMAEAYDVALAPHCPLGPIALAACLHIDFVSRNAVFQEQSMGIHYNKGAELLDFVKNKEDFSMDGGFFKPLTKPGLGVDIDEARVIELSKSAPDWRNPLWRHADGSVAEW</sequence>
<protein>
    <recommendedName>
        <fullName evidence="2">D-galactonate dehydratase</fullName>
        <shortName evidence="2">GalD</shortName>
        <ecNumber evidence="2">4.2.1.6</ecNumber>
    </recommendedName>
</protein>
<accession>Q8ZKZ1</accession>
<comment type="function">
    <text evidence="2">Catalyzes the dehydration of D-galactonate to 2-keto-3-deoxy-D-galactonate.</text>
</comment>
<comment type="catalytic activity">
    <reaction evidence="2">
        <text>D-galactonate = 2-dehydro-3-deoxy-D-galactonate + H2O</text>
        <dbReference type="Rhea" id="RHEA:18649"/>
        <dbReference type="ChEBI" id="CHEBI:12931"/>
        <dbReference type="ChEBI" id="CHEBI:15377"/>
        <dbReference type="ChEBI" id="CHEBI:57989"/>
        <dbReference type="EC" id="4.2.1.6"/>
    </reaction>
</comment>
<comment type="cofactor">
    <cofactor evidence="2">
        <name>Mg(2+)</name>
        <dbReference type="ChEBI" id="CHEBI:18420"/>
    </cofactor>
    <text evidence="2">Binds 1 Mg(2+) ion per subunit.</text>
</comment>
<comment type="pathway">
    <text evidence="2">Carbohydrate acid metabolism; D-galactonate degradation; D-glyceraldehyde 3-phosphate and pyruvate from D-galactonate: step 1/3.</text>
</comment>
<comment type="miscellaneous">
    <text evidence="2">Reaction proceeds via an anti dehydration.</text>
</comment>
<comment type="similarity">
    <text evidence="2">Belongs to the mandelate racemase/muconate lactonizing enzyme family. GalD subfamily.</text>
</comment>
<name>DGOD_SALTY</name>
<organism>
    <name type="scientific">Salmonella typhimurium (strain LT2 / SGSC1412 / ATCC 700720)</name>
    <dbReference type="NCBI Taxonomy" id="99287"/>
    <lineage>
        <taxon>Bacteria</taxon>
        <taxon>Pseudomonadati</taxon>
        <taxon>Pseudomonadota</taxon>
        <taxon>Gammaproteobacteria</taxon>
        <taxon>Enterobacterales</taxon>
        <taxon>Enterobacteriaceae</taxon>
        <taxon>Salmonella</taxon>
    </lineage>
</organism>